<comment type="function">
    <text evidence="1">Nucleotidase that shows phosphatase activity on nucleoside 5'-monophosphates.</text>
</comment>
<comment type="catalytic activity">
    <reaction evidence="1">
        <text>a ribonucleoside 5'-phosphate + H2O = a ribonucleoside + phosphate</text>
        <dbReference type="Rhea" id="RHEA:12484"/>
        <dbReference type="ChEBI" id="CHEBI:15377"/>
        <dbReference type="ChEBI" id="CHEBI:18254"/>
        <dbReference type="ChEBI" id="CHEBI:43474"/>
        <dbReference type="ChEBI" id="CHEBI:58043"/>
        <dbReference type="EC" id="3.1.3.5"/>
    </reaction>
</comment>
<comment type="cofactor">
    <cofactor evidence="1">
        <name>a divalent metal cation</name>
        <dbReference type="ChEBI" id="CHEBI:60240"/>
    </cofactor>
    <text evidence="1">Binds 1 divalent metal cation per subunit.</text>
</comment>
<comment type="subcellular location">
    <subcellularLocation>
        <location evidence="1">Cytoplasm</location>
    </subcellularLocation>
</comment>
<comment type="similarity">
    <text evidence="1">Belongs to the SurE nucleotidase family.</text>
</comment>
<evidence type="ECO:0000255" key="1">
    <source>
        <dbReference type="HAMAP-Rule" id="MF_00060"/>
    </source>
</evidence>
<dbReference type="EC" id="3.1.3.5" evidence="1"/>
<dbReference type="EMBL" id="AE001439">
    <property type="protein sequence ID" value="AAD06448.1"/>
    <property type="molecule type" value="Genomic_DNA"/>
</dbReference>
<dbReference type="PIR" id="H71878">
    <property type="entry name" value="H71878"/>
</dbReference>
<dbReference type="RefSeq" id="WP_000722501.1">
    <property type="nucleotide sequence ID" value="NC_000921.1"/>
</dbReference>
<dbReference type="SMR" id="Q9ZKS0"/>
<dbReference type="KEGG" id="hpj:jhp_0865"/>
<dbReference type="eggNOG" id="COG0496">
    <property type="taxonomic scope" value="Bacteria"/>
</dbReference>
<dbReference type="Proteomes" id="UP000000804">
    <property type="component" value="Chromosome"/>
</dbReference>
<dbReference type="GO" id="GO:0005737">
    <property type="term" value="C:cytoplasm"/>
    <property type="evidence" value="ECO:0007669"/>
    <property type="project" value="UniProtKB-SubCell"/>
</dbReference>
<dbReference type="GO" id="GO:0008254">
    <property type="term" value="F:3'-nucleotidase activity"/>
    <property type="evidence" value="ECO:0007669"/>
    <property type="project" value="TreeGrafter"/>
</dbReference>
<dbReference type="GO" id="GO:0008253">
    <property type="term" value="F:5'-nucleotidase activity"/>
    <property type="evidence" value="ECO:0007669"/>
    <property type="project" value="UniProtKB-UniRule"/>
</dbReference>
<dbReference type="GO" id="GO:0004309">
    <property type="term" value="F:exopolyphosphatase activity"/>
    <property type="evidence" value="ECO:0007669"/>
    <property type="project" value="TreeGrafter"/>
</dbReference>
<dbReference type="GO" id="GO:0046872">
    <property type="term" value="F:metal ion binding"/>
    <property type="evidence" value="ECO:0007669"/>
    <property type="project" value="UniProtKB-UniRule"/>
</dbReference>
<dbReference type="GO" id="GO:0000166">
    <property type="term" value="F:nucleotide binding"/>
    <property type="evidence" value="ECO:0007669"/>
    <property type="project" value="UniProtKB-KW"/>
</dbReference>
<dbReference type="FunFam" id="3.40.1210.10:FF:000001">
    <property type="entry name" value="5'/3'-nucleotidase SurE"/>
    <property type="match status" value="1"/>
</dbReference>
<dbReference type="Gene3D" id="3.40.1210.10">
    <property type="entry name" value="Survival protein SurE-like phosphatase/nucleotidase"/>
    <property type="match status" value="1"/>
</dbReference>
<dbReference type="HAMAP" id="MF_00060">
    <property type="entry name" value="SurE"/>
    <property type="match status" value="1"/>
</dbReference>
<dbReference type="InterPro" id="IPR030048">
    <property type="entry name" value="SurE"/>
</dbReference>
<dbReference type="InterPro" id="IPR002828">
    <property type="entry name" value="SurE-like_Pase/nucleotidase"/>
</dbReference>
<dbReference type="InterPro" id="IPR036523">
    <property type="entry name" value="SurE-like_sf"/>
</dbReference>
<dbReference type="NCBIfam" id="NF001490">
    <property type="entry name" value="PRK00346.1-4"/>
    <property type="match status" value="1"/>
</dbReference>
<dbReference type="NCBIfam" id="NF001494">
    <property type="entry name" value="PRK00346.2-4"/>
    <property type="match status" value="1"/>
</dbReference>
<dbReference type="NCBIfam" id="TIGR00087">
    <property type="entry name" value="surE"/>
    <property type="match status" value="1"/>
</dbReference>
<dbReference type="PANTHER" id="PTHR30457">
    <property type="entry name" value="5'-NUCLEOTIDASE SURE"/>
    <property type="match status" value="1"/>
</dbReference>
<dbReference type="PANTHER" id="PTHR30457:SF12">
    <property type="entry name" value="5'_3'-NUCLEOTIDASE SURE"/>
    <property type="match status" value="1"/>
</dbReference>
<dbReference type="Pfam" id="PF01975">
    <property type="entry name" value="SurE"/>
    <property type="match status" value="1"/>
</dbReference>
<dbReference type="SUPFAM" id="SSF64167">
    <property type="entry name" value="SurE-like"/>
    <property type="match status" value="1"/>
</dbReference>
<reference key="1">
    <citation type="journal article" date="1999" name="Nature">
        <title>Genomic sequence comparison of two unrelated isolates of the human gastric pathogen Helicobacter pylori.</title>
        <authorList>
            <person name="Alm R.A."/>
            <person name="Ling L.-S.L."/>
            <person name="Moir D.T."/>
            <person name="King B.L."/>
            <person name="Brown E.D."/>
            <person name="Doig P.C."/>
            <person name="Smith D.R."/>
            <person name="Noonan B."/>
            <person name="Guild B.C."/>
            <person name="deJonge B.L."/>
            <person name="Carmel G."/>
            <person name="Tummino P.J."/>
            <person name="Caruso A."/>
            <person name="Uria-Nickelsen M."/>
            <person name="Mills D.M."/>
            <person name="Ives C."/>
            <person name="Gibson R."/>
            <person name="Merberg D."/>
            <person name="Mills S.D."/>
            <person name="Jiang Q."/>
            <person name="Taylor D.E."/>
            <person name="Vovis G.F."/>
            <person name="Trust T.J."/>
        </authorList>
    </citation>
    <scope>NUCLEOTIDE SEQUENCE [LARGE SCALE GENOMIC DNA]</scope>
    <source>
        <strain>J99 / ATCC 700824</strain>
    </source>
</reference>
<protein>
    <recommendedName>
        <fullName evidence="1">5'-nucleotidase SurE</fullName>
        <ecNumber evidence="1">3.1.3.5</ecNumber>
    </recommendedName>
    <alternativeName>
        <fullName evidence="1">Nucleoside 5'-monophosphate phosphohydrolase</fullName>
    </alternativeName>
</protein>
<name>SURE_HELPJ</name>
<feature type="chain" id="PRO_0000111818" description="5'-nucleotidase SurE">
    <location>
        <begin position="1"/>
        <end position="267"/>
    </location>
</feature>
<feature type="binding site" evidence="1">
    <location>
        <position position="9"/>
    </location>
    <ligand>
        <name>a divalent metal cation</name>
        <dbReference type="ChEBI" id="CHEBI:60240"/>
    </ligand>
</feature>
<feature type="binding site" evidence="1">
    <location>
        <position position="10"/>
    </location>
    <ligand>
        <name>a divalent metal cation</name>
        <dbReference type="ChEBI" id="CHEBI:60240"/>
    </ligand>
</feature>
<feature type="binding site" evidence="1">
    <location>
        <position position="40"/>
    </location>
    <ligand>
        <name>a divalent metal cation</name>
        <dbReference type="ChEBI" id="CHEBI:60240"/>
    </ligand>
</feature>
<feature type="binding site" evidence="1">
    <location>
        <position position="97"/>
    </location>
    <ligand>
        <name>a divalent metal cation</name>
        <dbReference type="ChEBI" id="CHEBI:60240"/>
    </ligand>
</feature>
<keyword id="KW-0963">Cytoplasm</keyword>
<keyword id="KW-0378">Hydrolase</keyword>
<keyword id="KW-0479">Metal-binding</keyword>
<keyword id="KW-0547">Nucleotide-binding</keyword>
<accession>Q9ZKS0</accession>
<sequence>MKKILLTNDDGYHAKGIKALEQALENMAEIYVVAPKHEKSACSQCITITAPLRAEKIKGKEGRHYRIDDGTPSDCVYLAINELFKHVCFDLVISGINLGSNMGEDTIYSGTVAGAIEGTIQGVPSIAISQILSNKNKNTPLSFDLAQKIIQDLVQNVFTKGYPLKGRKLLNVNVPNCSLQEYKGERITPKGYRLYKKEVHKRTDPKNESYFWLGLHPLKWQKRENEDRLSDFDAIASNHASITPLNLDLTSYDDLKSLESWHEGMLK</sequence>
<organism>
    <name type="scientific">Helicobacter pylori (strain J99 / ATCC 700824)</name>
    <name type="common">Campylobacter pylori J99</name>
    <dbReference type="NCBI Taxonomy" id="85963"/>
    <lineage>
        <taxon>Bacteria</taxon>
        <taxon>Pseudomonadati</taxon>
        <taxon>Campylobacterota</taxon>
        <taxon>Epsilonproteobacteria</taxon>
        <taxon>Campylobacterales</taxon>
        <taxon>Helicobacteraceae</taxon>
        <taxon>Helicobacter</taxon>
    </lineage>
</organism>
<gene>
    <name evidence="1" type="primary">surE</name>
    <name type="ordered locus">jhp_0865</name>
</gene>
<proteinExistence type="inferred from homology"/>